<sequence length="134" mass="16076">MTIRPAYRPKIIKKRTKHFIRHQSDRYAKLSHKWRKPKGIDNRVRRRFKGQYLMPNIGYGSNKRTRHMLPTGFKKFLVHNVRELEVLLMQNRIYCGEIAHAVSSKKRKEIVERAKQLSIRLTNPNGRLRSQENE</sequence>
<gene>
    <name type="primary">RpL32</name>
    <name type="synonym">rp49</name>
</gene>
<keyword id="KW-0687">Ribonucleoprotein</keyword>
<keyword id="KW-0689">Ribosomal protein</keyword>
<organism>
    <name type="scientific">Drosophila bifasciata</name>
    <name type="common">Fruit fly</name>
    <dbReference type="NCBI Taxonomy" id="7218"/>
    <lineage>
        <taxon>Eukaryota</taxon>
        <taxon>Metazoa</taxon>
        <taxon>Ecdysozoa</taxon>
        <taxon>Arthropoda</taxon>
        <taxon>Hexapoda</taxon>
        <taxon>Insecta</taxon>
        <taxon>Pterygota</taxon>
        <taxon>Neoptera</taxon>
        <taxon>Endopterygota</taxon>
        <taxon>Diptera</taxon>
        <taxon>Brachycera</taxon>
        <taxon>Muscomorpha</taxon>
        <taxon>Ephydroidea</taxon>
        <taxon>Drosophilidae</taxon>
        <taxon>Drosophila</taxon>
        <taxon>Sophophora</taxon>
    </lineage>
</organism>
<comment type="similarity">
    <text evidence="1">Belongs to the eukaryotic ribosomal protein eL32 family.</text>
</comment>
<protein>
    <recommendedName>
        <fullName evidence="1">Large ribosomal subunit protein eL32</fullName>
    </recommendedName>
    <alternativeName>
        <fullName>60S ribosomal protein L32</fullName>
    </alternativeName>
    <alternativeName>
        <fullName>Ribosomal protein 49</fullName>
    </alternativeName>
</protein>
<dbReference type="EMBL" id="Y09706">
    <property type="protein sequence ID" value="CAA70877.1"/>
    <property type="molecule type" value="Genomic_DNA"/>
</dbReference>
<dbReference type="SMR" id="P84312"/>
<dbReference type="GO" id="GO:0022625">
    <property type="term" value="C:cytosolic large ribosomal subunit"/>
    <property type="evidence" value="ECO:0007669"/>
    <property type="project" value="TreeGrafter"/>
</dbReference>
<dbReference type="GO" id="GO:0003735">
    <property type="term" value="F:structural constituent of ribosome"/>
    <property type="evidence" value="ECO:0007669"/>
    <property type="project" value="InterPro"/>
</dbReference>
<dbReference type="GO" id="GO:0006412">
    <property type="term" value="P:translation"/>
    <property type="evidence" value="ECO:0007669"/>
    <property type="project" value="InterPro"/>
</dbReference>
<dbReference type="CDD" id="cd00513">
    <property type="entry name" value="Ribosomal_L32_L32e"/>
    <property type="match status" value="1"/>
</dbReference>
<dbReference type="InterPro" id="IPR001515">
    <property type="entry name" value="Ribosomal_eL32"/>
</dbReference>
<dbReference type="InterPro" id="IPR018263">
    <property type="entry name" value="Ribosomal_eL32_CS"/>
</dbReference>
<dbReference type="InterPro" id="IPR036351">
    <property type="entry name" value="Ribosomal_eL32_sf"/>
</dbReference>
<dbReference type="PANTHER" id="PTHR23413">
    <property type="entry name" value="60S RIBOSOMAL PROTEIN L32 AND DNA-DIRECTED RNA POLYMERASE II, SUBUNIT N"/>
    <property type="match status" value="1"/>
</dbReference>
<dbReference type="PANTHER" id="PTHR23413:SF1">
    <property type="entry name" value="RIBOSOMAL PROTEIN L32"/>
    <property type="match status" value="1"/>
</dbReference>
<dbReference type="Pfam" id="PF01655">
    <property type="entry name" value="Ribosomal_L32e"/>
    <property type="match status" value="1"/>
</dbReference>
<dbReference type="SMART" id="SM01393">
    <property type="entry name" value="Ribosomal_L32e"/>
    <property type="match status" value="1"/>
</dbReference>
<dbReference type="SUPFAM" id="SSF52042">
    <property type="entry name" value="Ribosomal protein L32e"/>
    <property type="match status" value="1"/>
</dbReference>
<dbReference type="PROSITE" id="PS00580">
    <property type="entry name" value="RIBOSOMAL_L32E"/>
    <property type="match status" value="1"/>
</dbReference>
<evidence type="ECO:0000305" key="1"/>
<reference key="1">
    <citation type="journal article" date="1998" name="Mol. Phylogenet. Evol.">
        <title>Molecular and chromosomal phylogeny in the obscura group of Drosophila inferred from sequences of the rp49 gene region.</title>
        <authorList>
            <person name="Ramos-Onsins S."/>
            <person name="Segarra C."/>
            <person name="Rozas J."/>
            <person name="Aguade M."/>
        </authorList>
    </citation>
    <scope>NUCLEOTIDE SEQUENCE [GENOMIC DNA]</scope>
</reference>
<name>RL32_DROBF</name>
<proteinExistence type="inferred from homology"/>
<accession>P84312</accession>
<accession>P13930</accession>
<feature type="chain" id="PRO_0000131125" description="Large ribosomal subunit protein eL32">
    <location>
        <begin position="1"/>
        <end position="134"/>
    </location>
</feature>